<organism>
    <name type="scientific">Gemmatimonas aurantiaca (strain DSM 14586 / JCM 11422 / NBRC 100505 / T-27)</name>
    <dbReference type="NCBI Taxonomy" id="379066"/>
    <lineage>
        <taxon>Bacteria</taxon>
        <taxon>Pseudomonadati</taxon>
        <taxon>Gemmatimonadota</taxon>
        <taxon>Gemmatimonadia</taxon>
        <taxon>Gemmatimonadales</taxon>
        <taxon>Gemmatimonadaceae</taxon>
        <taxon>Gemmatimonas</taxon>
    </lineage>
</organism>
<comment type="function">
    <text evidence="1">Protease subunit of a proteasome-like degradation complex believed to be a general protein degrading machinery.</text>
</comment>
<comment type="catalytic activity">
    <reaction evidence="1">
        <text>ATP-dependent cleavage of peptide bonds with broad specificity.</text>
        <dbReference type="EC" id="3.4.25.2"/>
    </reaction>
</comment>
<comment type="activity regulation">
    <text evidence="1">Allosterically activated by HslU binding.</text>
</comment>
<comment type="subunit">
    <text evidence="1">A double ring-shaped homohexamer of HslV is capped on each side by a ring-shaped HslU homohexamer. The assembly of the HslU/HslV complex is dependent on binding of ATP.</text>
</comment>
<comment type="subcellular location">
    <subcellularLocation>
        <location evidence="1">Cytoplasm</location>
    </subcellularLocation>
</comment>
<comment type="similarity">
    <text evidence="1">Belongs to the peptidase T1B family. HslV subfamily.</text>
</comment>
<keyword id="KW-0021">Allosteric enzyme</keyword>
<keyword id="KW-0963">Cytoplasm</keyword>
<keyword id="KW-0378">Hydrolase</keyword>
<keyword id="KW-0479">Metal-binding</keyword>
<keyword id="KW-0645">Protease</keyword>
<keyword id="KW-1185">Reference proteome</keyword>
<keyword id="KW-0915">Sodium</keyword>
<keyword id="KW-0888">Threonine protease</keyword>
<proteinExistence type="inferred from homology"/>
<gene>
    <name evidence="1" type="primary">hslV</name>
    <name type="ordered locus">GAU_2505</name>
</gene>
<feature type="chain" id="PRO_1000204505" description="ATP-dependent protease subunit HslV">
    <location>
        <begin position="1"/>
        <end position="181"/>
    </location>
</feature>
<feature type="active site" evidence="1">
    <location>
        <position position="9"/>
    </location>
</feature>
<feature type="binding site" evidence="1">
    <location>
        <position position="164"/>
    </location>
    <ligand>
        <name>Na(+)</name>
        <dbReference type="ChEBI" id="CHEBI:29101"/>
    </ligand>
</feature>
<feature type="binding site" evidence="1">
    <location>
        <position position="167"/>
    </location>
    <ligand>
        <name>Na(+)</name>
        <dbReference type="ChEBI" id="CHEBI:29101"/>
    </ligand>
</feature>
<feature type="binding site" evidence="1">
    <location>
        <position position="170"/>
    </location>
    <ligand>
        <name>Na(+)</name>
        <dbReference type="ChEBI" id="CHEBI:29101"/>
    </ligand>
</feature>
<reference key="1">
    <citation type="submission" date="2006-03" db="EMBL/GenBank/DDBJ databases">
        <title>Complete genome sequence of Gemmatimonas aurantiaca T-27 that represents a novel phylum Gemmatimonadetes.</title>
        <authorList>
            <person name="Takasaki K."/>
            <person name="Ichikawa N."/>
            <person name="Miura H."/>
            <person name="Matsushita S."/>
            <person name="Watanabe Y."/>
            <person name="Oguchi A."/>
            <person name="Ankai A."/>
            <person name="Yashiro I."/>
            <person name="Takahashi M."/>
            <person name="Terui Y."/>
            <person name="Fukui S."/>
            <person name="Yokoyama H."/>
            <person name="Tanikawa S."/>
            <person name="Hanada S."/>
            <person name="Kamagata Y."/>
            <person name="Fujita N."/>
        </authorList>
    </citation>
    <scope>NUCLEOTIDE SEQUENCE [LARGE SCALE GENOMIC DNA]</scope>
    <source>
        <strain>DSM 14586 / JCM 11422 / NBRC 100505 / T-27</strain>
    </source>
</reference>
<name>HSLV_GEMAT</name>
<protein>
    <recommendedName>
        <fullName evidence="1">ATP-dependent protease subunit HslV</fullName>
        <ecNumber evidence="1">3.4.25.2</ecNumber>
    </recommendedName>
</protein>
<evidence type="ECO:0000255" key="1">
    <source>
        <dbReference type="HAMAP-Rule" id="MF_00248"/>
    </source>
</evidence>
<accession>C1ABE1</accession>
<sequence length="181" mass="19494">MPLPQVRATTILAVRRNGQVAIGGDGQVSVGDTVAKQRAVKVRTLKGGRVLAGFAGSVADALTLFEKFEEKLERYPGNLPRASVELAKEWRSDRVLRRLEAMLIVADVEHGFMLSGNGELIEPDDGILAIGSGGAYAQAAARALMRETQLPPRDIVEKALTIAGEICIYTNTNITVLEPTR</sequence>
<dbReference type="EC" id="3.4.25.2" evidence="1"/>
<dbReference type="EMBL" id="AP009153">
    <property type="protein sequence ID" value="BAH39547.1"/>
    <property type="molecule type" value="Genomic_DNA"/>
</dbReference>
<dbReference type="RefSeq" id="WP_015894316.1">
    <property type="nucleotide sequence ID" value="NC_012489.1"/>
</dbReference>
<dbReference type="SMR" id="C1ABE1"/>
<dbReference type="STRING" id="379066.GAU_2505"/>
<dbReference type="MEROPS" id="T01.006"/>
<dbReference type="KEGG" id="gau:GAU_2505"/>
<dbReference type="eggNOG" id="COG5405">
    <property type="taxonomic scope" value="Bacteria"/>
</dbReference>
<dbReference type="HOGENOM" id="CLU_093872_1_0_0"/>
<dbReference type="OrthoDB" id="9804884at2"/>
<dbReference type="Proteomes" id="UP000002209">
    <property type="component" value="Chromosome"/>
</dbReference>
<dbReference type="GO" id="GO:0009376">
    <property type="term" value="C:HslUV protease complex"/>
    <property type="evidence" value="ECO:0007669"/>
    <property type="project" value="UniProtKB-UniRule"/>
</dbReference>
<dbReference type="GO" id="GO:0005839">
    <property type="term" value="C:proteasome core complex"/>
    <property type="evidence" value="ECO:0007669"/>
    <property type="project" value="InterPro"/>
</dbReference>
<dbReference type="GO" id="GO:0046872">
    <property type="term" value="F:metal ion binding"/>
    <property type="evidence" value="ECO:0007669"/>
    <property type="project" value="UniProtKB-KW"/>
</dbReference>
<dbReference type="GO" id="GO:0004298">
    <property type="term" value="F:threonine-type endopeptidase activity"/>
    <property type="evidence" value="ECO:0007669"/>
    <property type="project" value="UniProtKB-KW"/>
</dbReference>
<dbReference type="GO" id="GO:0051603">
    <property type="term" value="P:proteolysis involved in protein catabolic process"/>
    <property type="evidence" value="ECO:0007669"/>
    <property type="project" value="InterPro"/>
</dbReference>
<dbReference type="CDD" id="cd01913">
    <property type="entry name" value="protease_HslV"/>
    <property type="match status" value="1"/>
</dbReference>
<dbReference type="Gene3D" id="3.60.20.10">
    <property type="entry name" value="Glutamine Phosphoribosylpyrophosphate, subunit 1, domain 1"/>
    <property type="match status" value="1"/>
</dbReference>
<dbReference type="HAMAP" id="MF_00248">
    <property type="entry name" value="HslV"/>
    <property type="match status" value="1"/>
</dbReference>
<dbReference type="InterPro" id="IPR022281">
    <property type="entry name" value="ATP-dep_Prtase_HsIV_su"/>
</dbReference>
<dbReference type="InterPro" id="IPR029055">
    <property type="entry name" value="Ntn_hydrolases_N"/>
</dbReference>
<dbReference type="InterPro" id="IPR001353">
    <property type="entry name" value="Proteasome_sua/b"/>
</dbReference>
<dbReference type="InterPro" id="IPR023333">
    <property type="entry name" value="Proteasome_suB-type"/>
</dbReference>
<dbReference type="NCBIfam" id="TIGR03692">
    <property type="entry name" value="ATP_dep_HslV"/>
    <property type="match status" value="1"/>
</dbReference>
<dbReference type="NCBIfam" id="NF003964">
    <property type="entry name" value="PRK05456.1"/>
    <property type="match status" value="1"/>
</dbReference>
<dbReference type="PANTHER" id="PTHR32194:SF0">
    <property type="entry name" value="ATP-DEPENDENT PROTEASE SUBUNIT HSLV"/>
    <property type="match status" value="1"/>
</dbReference>
<dbReference type="PANTHER" id="PTHR32194">
    <property type="entry name" value="METALLOPROTEASE TLDD"/>
    <property type="match status" value="1"/>
</dbReference>
<dbReference type="Pfam" id="PF00227">
    <property type="entry name" value="Proteasome"/>
    <property type="match status" value="1"/>
</dbReference>
<dbReference type="PIRSF" id="PIRSF039093">
    <property type="entry name" value="HslV"/>
    <property type="match status" value="1"/>
</dbReference>
<dbReference type="SUPFAM" id="SSF56235">
    <property type="entry name" value="N-terminal nucleophile aminohydrolases (Ntn hydrolases)"/>
    <property type="match status" value="1"/>
</dbReference>
<dbReference type="PROSITE" id="PS51476">
    <property type="entry name" value="PROTEASOME_BETA_2"/>
    <property type="match status" value="1"/>
</dbReference>